<sequence>MDPFTEKLLERTRARRENLQRKMAERPTAVARSAPHAKRGREPLSEASNQQQPLPGGEEKSCTKPSPSKKRCSDKIEVGAPDLENTEPIDVAKPCSPMPAPRQAKPPAPAAISESVAAPAALLSADRGLNSGSEASATSSVKTRMQRLAEQRRHWDSDLTDDVSESSYFAPVPTEDKAASPSKPPISNASATPVGRRGRLANLAATICSWEDDVSHSSAKQNSVQEQPGTACLSKSSSASGASASINSSSVQQEATCCSPRDGNASVRKDPSSNAAHGPLLSASVSSSVKASSPVTAATFITENREAQNPELLHKTASPLKTEARKPCEKPTLSQGAQPKEEANREVCLQSQSKDKLATPGGRGIKPFLERFGERCQEHSKESPSYRASHKTPNITPNTKAIQERLFKQNTCSSTTHLAQQLKQEREKELACLRGRLDKGNLWSAEKNEKSRSKHLETKQEVHCQNTPLKKHQTVASTPLTSVTDKVAENEPAVKLSSTEPAGSTESEMTKSSPLKITLFLEEEKSLKVASDLEVEQNTEAVREVEMSVDDEDINSSRVINDIFSDVLEEGELDVEKSQEEMDQVGAENSEEQEDALNISSMSLLAPLAQTVGVVSLENVISSPPSELRDSNLSAASPKPGKFQRTRVPRAESADSLGSEDRDLLYSIDAYRSQRFKETERPSIKQVIVRKEDVTSKLGEKKNVFSGQVNIKQKMQELNNDINLQQTVIYQASQALNCCVDEEHGKGSLEEAEAERLLLIATEKRALLIDELNKLKSEGPQRRNKTSVISQSEFAPSKGSVTLSEICLPLKADFVCSTAQKTDASNYYYLIMLKAGAEQMVATPLASTANSLSGDALTFPTTFTLHDVSNDFEINIEVYSLVQKKDSLGPDKKKKASKSKAITPKRLLTSITSKSSLHSSVMASPGGLGAVRTSNFTLVGSHTLSLSSVGDTKFALDKVPFLSPLEGHICLKISCQVNSAVEEKGFLTIFEDVSGFGAWHRRWCVLSGNCISYWTYPDDERRKNPIGRINLANCISHQIEPANREFCARRNTLELITVRPQREDDRETLVSQCRDTLCVTKNWLSADTKEERDLWMQKLNQVIVDIRLWQPDACYKPVGKP</sequence>
<dbReference type="EMBL" id="BC030489">
    <property type="protein sequence ID" value="AAH30489.1"/>
    <property type="status" value="ALT_INIT"/>
    <property type="molecule type" value="mRNA"/>
</dbReference>
<dbReference type="EMBL" id="BC032164">
    <property type="protein sequence ID" value="AAH32164.1"/>
    <property type="molecule type" value="mRNA"/>
</dbReference>
<dbReference type="EMBL" id="AK013624">
    <property type="protein sequence ID" value="BAB28931.3"/>
    <property type="molecule type" value="mRNA"/>
</dbReference>
<dbReference type="EMBL" id="AK045703">
    <property type="protein sequence ID" value="BAC32464.1"/>
    <property type="molecule type" value="mRNA"/>
</dbReference>
<dbReference type="EMBL" id="AK046102">
    <property type="protein sequence ID" value="BAC32605.1"/>
    <property type="status" value="ALT_INIT"/>
    <property type="molecule type" value="mRNA"/>
</dbReference>
<dbReference type="CCDS" id="CCDS22927.1"/>
<dbReference type="RefSeq" id="NP_082666.2">
    <property type="nucleotide sequence ID" value="NM_028390.4"/>
</dbReference>
<dbReference type="SMR" id="Q8K298"/>
<dbReference type="BioGRID" id="213029">
    <property type="interactions" value="5"/>
</dbReference>
<dbReference type="FunCoup" id="Q8K298">
    <property type="interactions" value="841"/>
</dbReference>
<dbReference type="IntAct" id="Q8K298">
    <property type="interactions" value="3"/>
</dbReference>
<dbReference type="MINT" id="Q8K298"/>
<dbReference type="STRING" id="10090.ENSMUSP00000045873"/>
<dbReference type="GlyConnect" id="2105">
    <property type="glycosylation" value="1 N-Linked glycan (1 site)"/>
</dbReference>
<dbReference type="GlyCosmos" id="Q8K298">
    <property type="glycosylation" value="1 site, 1 glycan"/>
</dbReference>
<dbReference type="GlyGen" id="Q8K298">
    <property type="glycosylation" value="3 sites, 2 N-linked glycans (2 sites), 1 O-linked glycan (1 site)"/>
</dbReference>
<dbReference type="iPTMnet" id="Q8K298"/>
<dbReference type="PhosphoSitePlus" id="Q8K298"/>
<dbReference type="SwissPalm" id="Q8K298"/>
<dbReference type="jPOST" id="Q8K298"/>
<dbReference type="PaxDb" id="10090-ENSMUSP00000045873"/>
<dbReference type="PeptideAtlas" id="Q8K298"/>
<dbReference type="ProteomicsDB" id="281869"/>
<dbReference type="Pumba" id="Q8K298"/>
<dbReference type="Antibodypedia" id="26544">
    <property type="antibodies" value="241 antibodies from 33 providers"/>
</dbReference>
<dbReference type="DNASU" id="68743"/>
<dbReference type="Ensembl" id="ENSMUST00000040912.9">
    <property type="protein sequence ID" value="ENSMUSP00000045873.8"/>
    <property type="gene ID" value="ENSMUSG00000036777.9"/>
</dbReference>
<dbReference type="GeneID" id="68743"/>
<dbReference type="KEGG" id="mmu:68743"/>
<dbReference type="UCSC" id="uc009ook.2">
    <property type="organism name" value="mouse"/>
</dbReference>
<dbReference type="AGR" id="MGI:1920174"/>
<dbReference type="CTD" id="54443"/>
<dbReference type="MGI" id="MGI:1920174">
    <property type="gene designation" value="Anln"/>
</dbReference>
<dbReference type="VEuPathDB" id="HostDB:ENSMUSG00000036777"/>
<dbReference type="eggNOG" id="KOG3640">
    <property type="taxonomic scope" value="Eukaryota"/>
</dbReference>
<dbReference type="GeneTree" id="ENSGT00390000008749"/>
<dbReference type="HOGENOM" id="CLU_009118_0_0_1"/>
<dbReference type="InParanoid" id="Q8K298"/>
<dbReference type="OMA" id="PKIEQQT"/>
<dbReference type="OrthoDB" id="5915976at2759"/>
<dbReference type="PhylomeDB" id="Q8K298"/>
<dbReference type="TreeFam" id="TF106494"/>
<dbReference type="Reactome" id="R-MMU-8980692">
    <property type="pathway name" value="RHOA GTPase cycle"/>
</dbReference>
<dbReference type="Reactome" id="R-MMU-9013026">
    <property type="pathway name" value="RHOB GTPase cycle"/>
</dbReference>
<dbReference type="Reactome" id="R-MMU-9013106">
    <property type="pathway name" value="RHOC GTPase cycle"/>
</dbReference>
<dbReference type="BioGRID-ORCS" id="68743">
    <property type="hits" value="12 hits in 79 CRISPR screens"/>
</dbReference>
<dbReference type="ChiTaRS" id="Anln">
    <property type="organism name" value="mouse"/>
</dbReference>
<dbReference type="PRO" id="PR:Q8K298"/>
<dbReference type="Proteomes" id="UP000000589">
    <property type="component" value="Chromosome 9"/>
</dbReference>
<dbReference type="RNAct" id="Q8K298">
    <property type="molecule type" value="protein"/>
</dbReference>
<dbReference type="Bgee" id="ENSMUSG00000036777">
    <property type="expression patterns" value="Expressed in cerebellar nuclear complex and 227 other cell types or tissues"/>
</dbReference>
<dbReference type="ExpressionAtlas" id="Q8K298">
    <property type="expression patterns" value="baseline and differential"/>
</dbReference>
<dbReference type="GO" id="GO:0015629">
    <property type="term" value="C:actin cytoskeleton"/>
    <property type="evidence" value="ECO:0000266"/>
    <property type="project" value="MGI"/>
</dbReference>
<dbReference type="GO" id="GO:0005826">
    <property type="term" value="C:actomyosin contractile ring"/>
    <property type="evidence" value="ECO:0000266"/>
    <property type="project" value="MGI"/>
</dbReference>
<dbReference type="GO" id="GO:0032059">
    <property type="term" value="C:bleb"/>
    <property type="evidence" value="ECO:0000250"/>
    <property type="project" value="UniProtKB"/>
</dbReference>
<dbReference type="GO" id="GO:0005938">
    <property type="term" value="C:cell cortex"/>
    <property type="evidence" value="ECO:0000250"/>
    <property type="project" value="UniProtKB"/>
</dbReference>
<dbReference type="GO" id="GO:0030496">
    <property type="term" value="C:midbody"/>
    <property type="evidence" value="ECO:0007669"/>
    <property type="project" value="Ensembl"/>
</dbReference>
<dbReference type="GO" id="GO:0005654">
    <property type="term" value="C:nucleoplasm"/>
    <property type="evidence" value="ECO:0007669"/>
    <property type="project" value="Ensembl"/>
</dbReference>
<dbReference type="GO" id="GO:0003779">
    <property type="term" value="F:actin binding"/>
    <property type="evidence" value="ECO:0000266"/>
    <property type="project" value="MGI"/>
</dbReference>
<dbReference type="GO" id="GO:0002244">
    <property type="term" value="P:hematopoietic progenitor cell differentiation"/>
    <property type="evidence" value="ECO:0000316"/>
    <property type="project" value="MGI"/>
</dbReference>
<dbReference type="GO" id="GO:0000281">
    <property type="term" value="P:mitotic cytokinesis"/>
    <property type="evidence" value="ECO:0000266"/>
    <property type="project" value="MGI"/>
</dbReference>
<dbReference type="GO" id="GO:0090521">
    <property type="term" value="P:podocyte cell migration"/>
    <property type="evidence" value="ECO:0000250"/>
    <property type="project" value="UniProtKB"/>
</dbReference>
<dbReference type="GO" id="GO:1904172">
    <property type="term" value="P:positive regulation of bleb assembly"/>
    <property type="evidence" value="ECO:0000250"/>
    <property type="project" value="UniProtKB"/>
</dbReference>
<dbReference type="CDD" id="cd01263">
    <property type="entry name" value="PH_anillin"/>
    <property type="match status" value="1"/>
</dbReference>
<dbReference type="FunFam" id="2.30.29.30:FF:000111">
    <property type="entry name" value="anillin isoform X1"/>
    <property type="match status" value="1"/>
</dbReference>
<dbReference type="Gene3D" id="2.30.29.30">
    <property type="entry name" value="Pleckstrin-homology domain (PH domain)/Phosphotyrosine-binding domain (PTB)"/>
    <property type="match status" value="1"/>
</dbReference>
<dbReference type="InterPro" id="IPR012966">
    <property type="entry name" value="AHD"/>
</dbReference>
<dbReference type="InterPro" id="IPR031970">
    <property type="entry name" value="Anillin_N"/>
</dbReference>
<dbReference type="InterPro" id="IPR051364">
    <property type="entry name" value="Cytokinesis/Rho-signaling"/>
</dbReference>
<dbReference type="InterPro" id="IPR011993">
    <property type="entry name" value="PH-like_dom_sf"/>
</dbReference>
<dbReference type="InterPro" id="IPR037840">
    <property type="entry name" value="PH_Anillin"/>
</dbReference>
<dbReference type="InterPro" id="IPR001849">
    <property type="entry name" value="PH_domain"/>
</dbReference>
<dbReference type="PANTHER" id="PTHR21538:SF27">
    <property type="entry name" value="ANILLIN"/>
    <property type="match status" value="1"/>
</dbReference>
<dbReference type="PANTHER" id="PTHR21538">
    <property type="entry name" value="ANILLIN/RHOTEKIN RTKN"/>
    <property type="match status" value="1"/>
</dbReference>
<dbReference type="Pfam" id="PF08174">
    <property type="entry name" value="Anillin"/>
    <property type="match status" value="1"/>
</dbReference>
<dbReference type="Pfam" id="PF16018">
    <property type="entry name" value="Anillin_N"/>
    <property type="match status" value="2"/>
</dbReference>
<dbReference type="Pfam" id="PF00169">
    <property type="entry name" value="PH"/>
    <property type="match status" value="1"/>
</dbReference>
<dbReference type="SMART" id="SM00233">
    <property type="entry name" value="PH"/>
    <property type="match status" value="1"/>
</dbReference>
<dbReference type="SUPFAM" id="SSF50729">
    <property type="entry name" value="PH domain-like"/>
    <property type="match status" value="1"/>
</dbReference>
<dbReference type="PROSITE" id="PS50003">
    <property type="entry name" value="PH_DOMAIN"/>
    <property type="match status" value="1"/>
</dbReference>
<name>ANLN_MOUSE</name>
<keyword id="KW-0007">Acetylation</keyword>
<keyword id="KW-0009">Actin-binding</keyword>
<keyword id="KW-0131">Cell cycle</keyword>
<keyword id="KW-0132">Cell division</keyword>
<keyword id="KW-0966">Cell projection</keyword>
<keyword id="KW-0175">Coiled coil</keyword>
<keyword id="KW-0963">Cytoplasm</keyword>
<keyword id="KW-0206">Cytoskeleton</keyword>
<keyword id="KW-0498">Mitosis</keyword>
<keyword id="KW-0539">Nucleus</keyword>
<keyword id="KW-0597">Phosphoprotein</keyword>
<keyword id="KW-1185">Reference proteome</keyword>
<keyword id="KW-0832">Ubl conjugation</keyword>
<comment type="function">
    <text evidence="2">Required for cytokinesis. Essential for the structural integrity of the cleavage furrow and for completion of cleavage furrow ingression. Plays a role in bleb assembly during metaphase and anaphase of mitosis. May play a significant role in podocyte cell migration.</text>
</comment>
<comment type="subunit">
    <text evidence="2">Interacts with F-actin. Interacts with CD2AP. May interact with RHOA. Interacts with FZR1/CDH1 during mitotic exit.</text>
</comment>
<comment type="subcellular location">
    <subcellularLocation>
        <location evidence="1">Nucleus</location>
    </subcellularLocation>
    <subcellularLocation>
        <location evidence="1">Cytoplasm</location>
        <location evidence="1">Cytoskeleton</location>
    </subcellularLocation>
    <subcellularLocation>
        <location evidence="2">Cytoplasm</location>
        <location evidence="2">Cell cortex</location>
    </subcellularLocation>
    <subcellularLocation>
        <location evidence="2">Cell projection</location>
        <location evidence="2">Bleb</location>
    </subcellularLocation>
    <text evidence="2">Mainly found in the nucleus during interphase. Colocalizes with cortical F-actin upon nuclear envelope breakdown in mitosis and subsequently concentrates in the area of the prospective contractile ring in anaphase. This pattern persists until telophase, when the protein becomes concentrated in the midbody.</text>
</comment>
<comment type="PTM">
    <text evidence="1">Phosphorylated during mitosis.</text>
</comment>
<comment type="PTM">
    <text evidence="1">Ubiquitinated, and this requires FZR1/CDH1.</text>
</comment>
<comment type="sequence caution" evidence="6">
    <conflict type="erroneous initiation">
        <sequence resource="EMBL-CDS" id="AAH30489"/>
    </conflict>
</comment>
<comment type="sequence caution" evidence="6">
    <conflict type="erroneous initiation">
        <sequence resource="EMBL-CDS" id="BAC32605"/>
    </conflict>
</comment>
<reference key="1">
    <citation type="journal article" date="2004" name="Genome Res.">
        <title>The status, quality, and expansion of the NIH full-length cDNA project: the Mammalian Gene Collection (MGC).</title>
        <authorList>
            <consortium name="The MGC Project Team"/>
        </authorList>
    </citation>
    <scope>NUCLEOTIDE SEQUENCE [LARGE SCALE MRNA]</scope>
    <source>
        <strain>FVB/N</strain>
        <tissue>Mammary tumor</tissue>
    </source>
</reference>
<reference key="2">
    <citation type="journal article" date="2005" name="Science">
        <title>The transcriptional landscape of the mammalian genome.</title>
        <authorList>
            <person name="Carninci P."/>
            <person name="Kasukawa T."/>
            <person name="Katayama S."/>
            <person name="Gough J."/>
            <person name="Frith M.C."/>
            <person name="Maeda N."/>
            <person name="Oyama R."/>
            <person name="Ravasi T."/>
            <person name="Lenhard B."/>
            <person name="Wells C."/>
            <person name="Kodzius R."/>
            <person name="Shimokawa K."/>
            <person name="Bajic V.B."/>
            <person name="Brenner S.E."/>
            <person name="Batalov S."/>
            <person name="Forrest A.R."/>
            <person name="Zavolan M."/>
            <person name="Davis M.J."/>
            <person name="Wilming L.G."/>
            <person name="Aidinis V."/>
            <person name="Allen J.E."/>
            <person name="Ambesi-Impiombato A."/>
            <person name="Apweiler R."/>
            <person name="Aturaliya R.N."/>
            <person name="Bailey T.L."/>
            <person name="Bansal M."/>
            <person name="Baxter L."/>
            <person name="Beisel K.W."/>
            <person name="Bersano T."/>
            <person name="Bono H."/>
            <person name="Chalk A.M."/>
            <person name="Chiu K.P."/>
            <person name="Choudhary V."/>
            <person name="Christoffels A."/>
            <person name="Clutterbuck D.R."/>
            <person name="Crowe M.L."/>
            <person name="Dalla E."/>
            <person name="Dalrymple B.P."/>
            <person name="de Bono B."/>
            <person name="Della Gatta G."/>
            <person name="di Bernardo D."/>
            <person name="Down T."/>
            <person name="Engstrom P."/>
            <person name="Fagiolini M."/>
            <person name="Faulkner G."/>
            <person name="Fletcher C.F."/>
            <person name="Fukushima T."/>
            <person name="Furuno M."/>
            <person name="Futaki S."/>
            <person name="Gariboldi M."/>
            <person name="Georgii-Hemming P."/>
            <person name="Gingeras T.R."/>
            <person name="Gojobori T."/>
            <person name="Green R.E."/>
            <person name="Gustincich S."/>
            <person name="Harbers M."/>
            <person name="Hayashi Y."/>
            <person name="Hensch T.K."/>
            <person name="Hirokawa N."/>
            <person name="Hill D."/>
            <person name="Huminiecki L."/>
            <person name="Iacono M."/>
            <person name="Ikeo K."/>
            <person name="Iwama A."/>
            <person name="Ishikawa T."/>
            <person name="Jakt M."/>
            <person name="Kanapin A."/>
            <person name="Katoh M."/>
            <person name="Kawasawa Y."/>
            <person name="Kelso J."/>
            <person name="Kitamura H."/>
            <person name="Kitano H."/>
            <person name="Kollias G."/>
            <person name="Krishnan S.P."/>
            <person name="Kruger A."/>
            <person name="Kummerfeld S.K."/>
            <person name="Kurochkin I.V."/>
            <person name="Lareau L.F."/>
            <person name="Lazarevic D."/>
            <person name="Lipovich L."/>
            <person name="Liu J."/>
            <person name="Liuni S."/>
            <person name="McWilliam S."/>
            <person name="Madan Babu M."/>
            <person name="Madera M."/>
            <person name="Marchionni L."/>
            <person name="Matsuda H."/>
            <person name="Matsuzawa S."/>
            <person name="Miki H."/>
            <person name="Mignone F."/>
            <person name="Miyake S."/>
            <person name="Morris K."/>
            <person name="Mottagui-Tabar S."/>
            <person name="Mulder N."/>
            <person name="Nakano N."/>
            <person name="Nakauchi H."/>
            <person name="Ng P."/>
            <person name="Nilsson R."/>
            <person name="Nishiguchi S."/>
            <person name="Nishikawa S."/>
            <person name="Nori F."/>
            <person name="Ohara O."/>
            <person name="Okazaki Y."/>
            <person name="Orlando V."/>
            <person name="Pang K.C."/>
            <person name="Pavan W.J."/>
            <person name="Pavesi G."/>
            <person name="Pesole G."/>
            <person name="Petrovsky N."/>
            <person name="Piazza S."/>
            <person name="Reed J."/>
            <person name="Reid J.F."/>
            <person name="Ring B.Z."/>
            <person name="Ringwald M."/>
            <person name="Rost B."/>
            <person name="Ruan Y."/>
            <person name="Salzberg S.L."/>
            <person name="Sandelin A."/>
            <person name="Schneider C."/>
            <person name="Schoenbach C."/>
            <person name="Sekiguchi K."/>
            <person name="Semple C.A."/>
            <person name="Seno S."/>
            <person name="Sessa L."/>
            <person name="Sheng Y."/>
            <person name="Shibata Y."/>
            <person name="Shimada H."/>
            <person name="Shimada K."/>
            <person name="Silva D."/>
            <person name="Sinclair B."/>
            <person name="Sperling S."/>
            <person name="Stupka E."/>
            <person name="Sugiura K."/>
            <person name="Sultana R."/>
            <person name="Takenaka Y."/>
            <person name="Taki K."/>
            <person name="Tammoja K."/>
            <person name="Tan S.L."/>
            <person name="Tang S."/>
            <person name="Taylor M.S."/>
            <person name="Tegner J."/>
            <person name="Teichmann S.A."/>
            <person name="Ueda H.R."/>
            <person name="van Nimwegen E."/>
            <person name="Verardo R."/>
            <person name="Wei C.L."/>
            <person name="Yagi K."/>
            <person name="Yamanishi H."/>
            <person name="Zabarovsky E."/>
            <person name="Zhu S."/>
            <person name="Zimmer A."/>
            <person name="Hide W."/>
            <person name="Bult C."/>
            <person name="Grimmond S.M."/>
            <person name="Teasdale R.D."/>
            <person name="Liu E.T."/>
            <person name="Brusic V."/>
            <person name="Quackenbush J."/>
            <person name="Wahlestedt C."/>
            <person name="Mattick J.S."/>
            <person name="Hume D.A."/>
            <person name="Kai C."/>
            <person name="Sasaki D."/>
            <person name="Tomaru Y."/>
            <person name="Fukuda S."/>
            <person name="Kanamori-Katayama M."/>
            <person name="Suzuki M."/>
            <person name="Aoki J."/>
            <person name="Arakawa T."/>
            <person name="Iida J."/>
            <person name="Imamura K."/>
            <person name="Itoh M."/>
            <person name="Kato T."/>
            <person name="Kawaji H."/>
            <person name="Kawagashira N."/>
            <person name="Kawashima T."/>
            <person name="Kojima M."/>
            <person name="Kondo S."/>
            <person name="Konno H."/>
            <person name="Nakano K."/>
            <person name="Ninomiya N."/>
            <person name="Nishio T."/>
            <person name="Okada M."/>
            <person name="Plessy C."/>
            <person name="Shibata K."/>
            <person name="Shiraki T."/>
            <person name="Suzuki S."/>
            <person name="Tagami M."/>
            <person name="Waki K."/>
            <person name="Watahiki A."/>
            <person name="Okamura-Oho Y."/>
            <person name="Suzuki H."/>
            <person name="Kawai J."/>
            <person name="Hayashizaki Y."/>
        </authorList>
    </citation>
    <scope>NUCLEOTIDE SEQUENCE [LARGE SCALE MRNA] OF 247-1121</scope>
    <source>
        <strain>C57BL/6J</strain>
        <tissue>Corpora quadrigemina</tissue>
        <tissue>Hippocampus</tissue>
    </source>
</reference>
<reference key="3">
    <citation type="journal article" date="2005" name="Nat. Biotechnol.">
        <title>Immunoaffinity profiling of tyrosine phosphorylation in cancer cells.</title>
        <authorList>
            <person name="Rush J."/>
            <person name="Moritz A."/>
            <person name="Lee K.A."/>
            <person name="Guo A."/>
            <person name="Goss V.L."/>
            <person name="Spek E.J."/>
            <person name="Zhang H."/>
            <person name="Zha X.-M."/>
            <person name="Polakiewicz R.D."/>
            <person name="Comb M.J."/>
        </authorList>
    </citation>
    <scope>IDENTIFICATION BY MASS SPECTROMETRY [LARGE SCALE ANALYSIS]</scope>
</reference>
<reference key="4">
    <citation type="journal article" date="2009" name="Immunity">
        <title>The phagosomal proteome in interferon-gamma-activated macrophages.</title>
        <authorList>
            <person name="Trost M."/>
            <person name="English L."/>
            <person name="Lemieux S."/>
            <person name="Courcelles M."/>
            <person name="Desjardins M."/>
            <person name="Thibault P."/>
        </authorList>
    </citation>
    <scope>PHOSPHORYLATION [LARGE SCALE ANALYSIS] AT SER-637</scope>
    <scope>IDENTIFICATION BY MASS SPECTROMETRY [LARGE SCALE ANALYSIS]</scope>
</reference>
<reference key="5">
    <citation type="journal article" date="2010" name="Cell">
        <title>A tissue-specific atlas of mouse protein phosphorylation and expression.</title>
        <authorList>
            <person name="Huttlin E.L."/>
            <person name="Jedrychowski M.P."/>
            <person name="Elias J.E."/>
            <person name="Goswami T."/>
            <person name="Rad R."/>
            <person name="Beausoleil S.A."/>
            <person name="Villen J."/>
            <person name="Haas W."/>
            <person name="Sowa M.E."/>
            <person name="Gygi S.P."/>
        </authorList>
    </citation>
    <scope>PHOSPHORYLATION [LARGE SCALE ANALYSIS] AT SER-73; SER-96; SER-180; THR-192; SER-259; SER-548; SER-637; SER-653; SER-656; SER-659 AND TYR-666</scope>
    <scope>IDENTIFICATION BY MASS SPECTROMETRY [LARGE SCALE ANALYSIS]</scope>
    <source>
        <tissue>Brain</tissue>
        <tissue>Lung</tissue>
        <tissue>Spleen</tissue>
        <tissue>Testis</tissue>
    </source>
</reference>
<accession>Q8K298</accession>
<accession>Q8BL79</accession>
<accession>Q8BLB3</accession>
<accession>Q8K2N0</accession>
<accession>Q9CUY0</accession>
<gene>
    <name type="primary">Anln</name>
</gene>
<feature type="chain" id="PRO_0000227966" description="Anillin">
    <location>
        <begin position="1"/>
        <end position="1121"/>
    </location>
</feature>
<feature type="domain" description="PH" evidence="4">
    <location>
        <begin position="980"/>
        <end position="1104"/>
    </location>
</feature>
<feature type="region of interest" description="Nuclear localization" evidence="1">
    <location>
        <begin position="1"/>
        <end position="228"/>
    </location>
</feature>
<feature type="region of interest" description="Interaction with CD2AP" evidence="1">
    <location>
        <begin position="1"/>
        <end position="154"/>
    </location>
</feature>
<feature type="region of interest" description="Disordered" evidence="5">
    <location>
        <begin position="1"/>
        <end position="113"/>
    </location>
</feature>
<feature type="region of interest" description="Required for ubiquitination" evidence="1">
    <location>
        <begin position="1"/>
        <end position="45"/>
    </location>
</feature>
<feature type="region of interest" description="Disordered" evidence="5">
    <location>
        <begin position="125"/>
        <end position="196"/>
    </location>
</feature>
<feature type="region of interest" description="Disordered" evidence="5">
    <location>
        <begin position="212"/>
        <end position="402"/>
    </location>
</feature>
<feature type="region of interest" description="Interaction with F-actin" evidence="1">
    <location>
        <begin position="229"/>
        <end position="671"/>
    </location>
</feature>
<feature type="region of interest" description="Disordered" evidence="5">
    <location>
        <begin position="490"/>
        <end position="511"/>
    </location>
</feature>
<feature type="region of interest" description="Disordered" evidence="5">
    <location>
        <begin position="623"/>
        <end position="656"/>
    </location>
</feature>
<feature type="region of interest" description="Localization to the cleavage furrow" evidence="1">
    <location>
        <begin position="725"/>
        <end position="1121"/>
    </location>
</feature>
<feature type="coiled-coil region" evidence="3">
    <location>
        <begin position="564"/>
        <end position="599"/>
    </location>
</feature>
<feature type="compositionally biased region" description="Basic and acidic residues" evidence="5">
    <location>
        <begin position="1"/>
        <end position="25"/>
    </location>
</feature>
<feature type="compositionally biased region" description="Pro residues" evidence="5">
    <location>
        <begin position="96"/>
        <end position="109"/>
    </location>
</feature>
<feature type="compositionally biased region" description="Polar residues" evidence="5">
    <location>
        <begin position="130"/>
        <end position="143"/>
    </location>
</feature>
<feature type="compositionally biased region" description="Basic and acidic residues" evidence="5">
    <location>
        <begin position="147"/>
        <end position="157"/>
    </location>
</feature>
<feature type="compositionally biased region" description="Polar residues" evidence="5">
    <location>
        <begin position="216"/>
        <end position="228"/>
    </location>
</feature>
<feature type="compositionally biased region" description="Low complexity" evidence="5">
    <location>
        <begin position="234"/>
        <end position="250"/>
    </location>
</feature>
<feature type="compositionally biased region" description="Low complexity" evidence="5">
    <location>
        <begin position="282"/>
        <end position="298"/>
    </location>
</feature>
<feature type="compositionally biased region" description="Basic and acidic residues" evidence="5">
    <location>
        <begin position="303"/>
        <end position="314"/>
    </location>
</feature>
<feature type="compositionally biased region" description="Basic and acidic residues" evidence="5">
    <location>
        <begin position="368"/>
        <end position="384"/>
    </location>
</feature>
<feature type="compositionally biased region" description="Polar residues" evidence="5">
    <location>
        <begin position="391"/>
        <end position="401"/>
    </location>
</feature>
<feature type="compositionally biased region" description="Polar residues" evidence="5">
    <location>
        <begin position="496"/>
        <end position="511"/>
    </location>
</feature>
<feature type="compositionally biased region" description="Polar residues" evidence="5">
    <location>
        <begin position="623"/>
        <end position="635"/>
    </location>
</feature>
<feature type="modified residue" description="N-acetylmethionine" evidence="2">
    <location>
        <position position="1"/>
    </location>
</feature>
<feature type="modified residue" description="Phosphoserine" evidence="8">
    <location>
        <position position="73"/>
    </location>
</feature>
<feature type="modified residue" description="Phosphoserine" evidence="8">
    <location>
        <position position="96"/>
    </location>
</feature>
<feature type="modified residue" description="Phosphoserine" evidence="8">
    <location>
        <position position="180"/>
    </location>
</feature>
<feature type="modified residue" description="Phosphothreonine" evidence="8">
    <location>
        <position position="192"/>
    </location>
</feature>
<feature type="modified residue" description="Phosphoserine" evidence="2">
    <location>
        <position position="223"/>
    </location>
</feature>
<feature type="modified residue" description="Phosphoserine" evidence="2">
    <location>
        <position position="250"/>
    </location>
</feature>
<feature type="modified residue" description="Phosphoserine" evidence="8">
    <location>
        <position position="259"/>
    </location>
</feature>
<feature type="modified residue" description="Phosphothreonine" evidence="2">
    <location>
        <position position="316"/>
    </location>
</feature>
<feature type="modified residue" description="Phosphoserine" evidence="2">
    <location>
        <position position="318"/>
    </location>
</feature>
<feature type="modified residue" description="Phosphoserine" evidence="2">
    <location>
        <position position="334"/>
    </location>
</feature>
<feature type="modified residue" description="Phosphothreonine" evidence="2">
    <location>
        <position position="359"/>
    </location>
</feature>
<feature type="modified residue" description="N6-acetyllysine" evidence="2">
    <location>
        <position position="366"/>
    </location>
</feature>
<feature type="modified residue" description="Phosphothreonine" evidence="2">
    <location>
        <position position="392"/>
    </location>
</feature>
<feature type="modified residue" description="Phosphothreonine" evidence="2">
    <location>
        <position position="396"/>
    </location>
</feature>
<feature type="modified residue" description="Phosphoserine" evidence="2">
    <location>
        <position position="414"/>
    </location>
</feature>
<feature type="modified residue" description="Phosphoserine" evidence="2">
    <location>
        <position position="444"/>
    </location>
</feature>
<feature type="modified residue" description="Phosphoserine" evidence="2">
    <location>
        <position position="513"/>
    </location>
</feature>
<feature type="modified residue" description="Phosphoserine" evidence="8">
    <location>
        <position position="548"/>
    </location>
</feature>
<feature type="modified residue" description="Phosphoserine" evidence="2">
    <location>
        <position position="556"/>
    </location>
</feature>
<feature type="modified residue" description="Phosphoserine" evidence="7 8">
    <location>
        <position position="637"/>
    </location>
</feature>
<feature type="modified residue" description="Phosphoserine" evidence="8">
    <location>
        <position position="653"/>
    </location>
</feature>
<feature type="modified residue" description="Phosphoserine" evidence="8">
    <location>
        <position position="656"/>
    </location>
</feature>
<feature type="modified residue" description="Phosphoserine" evidence="8">
    <location>
        <position position="659"/>
    </location>
</feature>
<feature type="modified residue" description="Phosphotyrosine" evidence="8">
    <location>
        <position position="666"/>
    </location>
</feature>
<feature type="modified residue" description="Phosphoserine" evidence="2">
    <location>
        <position position="673"/>
    </location>
</feature>
<feature type="modified residue" description="Phosphoserine" evidence="2">
    <location>
        <position position="683"/>
    </location>
</feature>
<feature type="modified residue" description="Phosphoserine" evidence="2">
    <location>
        <position position="787"/>
    </location>
</feature>
<feature type="modified residue" description="Phosphoserine" evidence="2">
    <location>
        <position position="924"/>
    </location>
</feature>
<feature type="sequence conflict" description="In Ref. 1; AAH32164." evidence="6" ref="1">
    <original>K</original>
    <variation>N</variation>
    <location>
        <position position="366"/>
    </location>
</feature>
<feature type="sequence conflict" description="In Ref. 2; BAC32464." evidence="6" ref="2">
    <original>G</original>
    <variation>S</variation>
    <location>
        <position position="613"/>
    </location>
</feature>
<organism>
    <name type="scientific">Mus musculus</name>
    <name type="common">Mouse</name>
    <dbReference type="NCBI Taxonomy" id="10090"/>
    <lineage>
        <taxon>Eukaryota</taxon>
        <taxon>Metazoa</taxon>
        <taxon>Chordata</taxon>
        <taxon>Craniata</taxon>
        <taxon>Vertebrata</taxon>
        <taxon>Euteleostomi</taxon>
        <taxon>Mammalia</taxon>
        <taxon>Eutheria</taxon>
        <taxon>Euarchontoglires</taxon>
        <taxon>Glires</taxon>
        <taxon>Rodentia</taxon>
        <taxon>Myomorpha</taxon>
        <taxon>Muroidea</taxon>
        <taxon>Muridae</taxon>
        <taxon>Murinae</taxon>
        <taxon>Mus</taxon>
        <taxon>Mus</taxon>
    </lineage>
</organism>
<protein>
    <recommendedName>
        <fullName>Anillin</fullName>
    </recommendedName>
</protein>
<evidence type="ECO:0000250" key="1"/>
<evidence type="ECO:0000250" key="2">
    <source>
        <dbReference type="UniProtKB" id="Q9NQW6"/>
    </source>
</evidence>
<evidence type="ECO:0000255" key="3"/>
<evidence type="ECO:0000255" key="4">
    <source>
        <dbReference type="PROSITE-ProRule" id="PRU00145"/>
    </source>
</evidence>
<evidence type="ECO:0000256" key="5">
    <source>
        <dbReference type="SAM" id="MobiDB-lite"/>
    </source>
</evidence>
<evidence type="ECO:0000305" key="6"/>
<evidence type="ECO:0007744" key="7">
    <source>
    </source>
</evidence>
<evidence type="ECO:0007744" key="8">
    <source>
    </source>
</evidence>
<proteinExistence type="evidence at protein level"/>